<comment type="catalytic activity">
    <reaction evidence="1">
        <text>(6S)-5,6,7,8-tetrahydrofolate + formate + ATP = (6R)-10-formyltetrahydrofolate + ADP + phosphate</text>
        <dbReference type="Rhea" id="RHEA:20221"/>
        <dbReference type="ChEBI" id="CHEBI:15740"/>
        <dbReference type="ChEBI" id="CHEBI:30616"/>
        <dbReference type="ChEBI" id="CHEBI:43474"/>
        <dbReference type="ChEBI" id="CHEBI:57453"/>
        <dbReference type="ChEBI" id="CHEBI:195366"/>
        <dbReference type="ChEBI" id="CHEBI:456216"/>
        <dbReference type="EC" id="6.3.4.3"/>
    </reaction>
</comment>
<comment type="pathway">
    <text evidence="1">One-carbon metabolism; tetrahydrofolate interconversion.</text>
</comment>
<comment type="similarity">
    <text evidence="1">Belongs to the formate--tetrahydrofolate ligase family.</text>
</comment>
<dbReference type="EC" id="6.3.4.3" evidence="1"/>
<dbReference type="EMBL" id="CP000232">
    <property type="protein sequence ID" value="ABC18448.1"/>
    <property type="molecule type" value="Genomic_DNA"/>
</dbReference>
<dbReference type="RefSeq" id="YP_428991.1">
    <property type="nucleotide sequence ID" value="NC_007644.1"/>
</dbReference>
<dbReference type="PDB" id="4IOJ">
    <property type="method" value="X-ray"/>
    <property type="resolution" value="2.20 A"/>
    <property type="chains" value="A/B=1-559"/>
</dbReference>
<dbReference type="PDB" id="4IOK">
    <property type="method" value="X-ray"/>
    <property type="resolution" value="2.50 A"/>
    <property type="chains" value="A/B=1-559"/>
</dbReference>
<dbReference type="PDB" id="4IOL">
    <property type="method" value="X-ray"/>
    <property type="resolution" value="2.56 A"/>
    <property type="chains" value="A/B=1-559"/>
</dbReference>
<dbReference type="PDB" id="4IOM">
    <property type="method" value="X-ray"/>
    <property type="resolution" value="3.00 A"/>
    <property type="chains" value="A/B=1-559"/>
</dbReference>
<dbReference type="PDBsum" id="4IOJ"/>
<dbReference type="PDBsum" id="4IOK"/>
<dbReference type="PDBsum" id="4IOL"/>
<dbReference type="PDBsum" id="4IOM"/>
<dbReference type="SMR" id="Q2RM91"/>
<dbReference type="STRING" id="264732.Moth_0109"/>
<dbReference type="EnsemblBacteria" id="ABC18448">
    <property type="protein sequence ID" value="ABC18448"/>
    <property type="gene ID" value="Moth_0109"/>
</dbReference>
<dbReference type="KEGG" id="mta:Moth_0109"/>
<dbReference type="PATRIC" id="fig|264732.11.peg.114"/>
<dbReference type="eggNOG" id="COG2759">
    <property type="taxonomic scope" value="Bacteria"/>
</dbReference>
<dbReference type="HOGENOM" id="CLU_003601_3_3_9"/>
<dbReference type="OrthoDB" id="9761733at2"/>
<dbReference type="UniPathway" id="UPA00193"/>
<dbReference type="EvolutionaryTrace" id="Q2RM91"/>
<dbReference type="GO" id="GO:0005524">
    <property type="term" value="F:ATP binding"/>
    <property type="evidence" value="ECO:0007669"/>
    <property type="project" value="UniProtKB-UniRule"/>
</dbReference>
<dbReference type="GO" id="GO:0004329">
    <property type="term" value="F:formate-tetrahydrofolate ligase activity"/>
    <property type="evidence" value="ECO:0007669"/>
    <property type="project" value="UniProtKB-UniRule"/>
</dbReference>
<dbReference type="GO" id="GO:0035999">
    <property type="term" value="P:tetrahydrofolate interconversion"/>
    <property type="evidence" value="ECO:0007669"/>
    <property type="project" value="UniProtKB-UniRule"/>
</dbReference>
<dbReference type="CDD" id="cd00477">
    <property type="entry name" value="FTHFS"/>
    <property type="match status" value="1"/>
</dbReference>
<dbReference type="FunFam" id="3.30.1510.10:FF:000001">
    <property type="entry name" value="Formate--tetrahydrofolate ligase"/>
    <property type="match status" value="1"/>
</dbReference>
<dbReference type="FunFam" id="3.10.410.10:FF:000001">
    <property type="entry name" value="Putative formate--tetrahydrofolate ligase"/>
    <property type="match status" value="1"/>
</dbReference>
<dbReference type="Gene3D" id="3.30.1510.10">
    <property type="entry name" value="Domain 2, N(10)-formyltetrahydrofolate synthetase"/>
    <property type="match status" value="1"/>
</dbReference>
<dbReference type="Gene3D" id="3.10.410.10">
    <property type="entry name" value="Formyltetrahydrofolate synthetase, domain 3"/>
    <property type="match status" value="1"/>
</dbReference>
<dbReference type="Gene3D" id="3.40.50.300">
    <property type="entry name" value="P-loop containing nucleotide triphosphate hydrolases"/>
    <property type="match status" value="1"/>
</dbReference>
<dbReference type="HAMAP" id="MF_01543">
    <property type="entry name" value="FTHFS"/>
    <property type="match status" value="1"/>
</dbReference>
<dbReference type="InterPro" id="IPR000559">
    <property type="entry name" value="Formate_THF_ligase"/>
</dbReference>
<dbReference type="InterPro" id="IPR020628">
    <property type="entry name" value="Formate_THF_ligase_CS"/>
</dbReference>
<dbReference type="InterPro" id="IPR027417">
    <property type="entry name" value="P-loop_NTPase"/>
</dbReference>
<dbReference type="NCBIfam" id="NF010030">
    <property type="entry name" value="PRK13505.1"/>
    <property type="match status" value="1"/>
</dbReference>
<dbReference type="Pfam" id="PF01268">
    <property type="entry name" value="FTHFS"/>
    <property type="match status" value="1"/>
</dbReference>
<dbReference type="SUPFAM" id="SSF52540">
    <property type="entry name" value="P-loop containing nucleoside triphosphate hydrolases"/>
    <property type="match status" value="1"/>
</dbReference>
<dbReference type="PROSITE" id="PS00721">
    <property type="entry name" value="FTHFS_1"/>
    <property type="match status" value="1"/>
</dbReference>
<dbReference type="PROSITE" id="PS00722">
    <property type="entry name" value="FTHFS_2"/>
    <property type="match status" value="1"/>
</dbReference>
<keyword id="KW-0002">3D-structure</keyword>
<keyword id="KW-0067">ATP-binding</keyword>
<keyword id="KW-0436">Ligase</keyword>
<keyword id="KW-0547">Nucleotide-binding</keyword>
<keyword id="KW-0554">One-carbon metabolism</keyword>
<organism>
    <name type="scientific">Moorella thermoacetica (strain ATCC 39073 / JCM 9320)</name>
    <dbReference type="NCBI Taxonomy" id="264732"/>
    <lineage>
        <taxon>Bacteria</taxon>
        <taxon>Bacillati</taxon>
        <taxon>Bacillota</taxon>
        <taxon>Clostridia</taxon>
        <taxon>Moorellales</taxon>
        <taxon>Moorellaceae</taxon>
        <taxon>Moorella</taxon>
    </lineage>
</organism>
<feature type="chain" id="PRO_0000300530" description="Formate--tetrahydrofolate ligase">
    <location>
        <begin position="1"/>
        <end position="559"/>
    </location>
</feature>
<feature type="binding site" evidence="1">
    <location>
        <begin position="68"/>
        <end position="75"/>
    </location>
    <ligand>
        <name>ATP</name>
        <dbReference type="ChEBI" id="CHEBI:30616"/>
    </ligand>
</feature>
<feature type="helix" evidence="2">
    <location>
        <begin position="7"/>
        <end position="12"/>
    </location>
</feature>
<feature type="helix" evidence="2">
    <location>
        <begin position="19"/>
        <end position="25"/>
    </location>
</feature>
<feature type="helix" evidence="2">
    <location>
        <begin position="30"/>
        <end position="32"/>
    </location>
</feature>
<feature type="strand" evidence="2">
    <location>
        <begin position="33"/>
        <end position="39"/>
    </location>
</feature>
<feature type="strand" evidence="2">
    <location>
        <begin position="41"/>
        <end position="43"/>
    </location>
</feature>
<feature type="helix" evidence="2">
    <location>
        <begin position="45"/>
        <end position="50"/>
    </location>
</feature>
<feature type="turn" evidence="2">
    <location>
        <begin position="51"/>
        <end position="53"/>
    </location>
</feature>
<feature type="strand" evidence="2">
    <location>
        <begin position="58"/>
        <end position="65"/>
    </location>
</feature>
<feature type="helix" evidence="2">
    <location>
        <begin position="74"/>
        <end position="87"/>
    </location>
</feature>
<feature type="strand" evidence="2">
    <location>
        <begin position="92"/>
        <end position="96"/>
    </location>
</feature>
<feature type="helix" evidence="2">
    <location>
        <begin position="102"/>
        <end position="105"/>
    </location>
</feature>
<feature type="turn" evidence="2">
    <location>
        <begin position="106"/>
        <end position="108"/>
    </location>
</feature>
<feature type="strand" evidence="2">
    <location>
        <begin position="112"/>
        <end position="114"/>
    </location>
</feature>
<feature type="strand" evidence="2">
    <location>
        <begin position="117"/>
        <end position="120"/>
    </location>
</feature>
<feature type="helix" evidence="2">
    <location>
        <begin position="122"/>
        <end position="126"/>
    </location>
</feature>
<feature type="turn" evidence="2">
    <location>
        <begin position="127"/>
        <end position="130"/>
    </location>
</feature>
<feature type="helix" evidence="2">
    <location>
        <begin position="132"/>
        <end position="152"/>
    </location>
</feature>
<feature type="helix" evidence="2">
    <location>
        <begin position="161"/>
        <end position="163"/>
    </location>
</feature>
<feature type="strand" evidence="2">
    <location>
        <begin position="168"/>
        <end position="172"/>
    </location>
</feature>
<feature type="helix" evidence="2">
    <location>
        <begin position="175"/>
        <end position="177"/>
    </location>
</feature>
<feature type="strand" evidence="2">
    <location>
        <begin position="178"/>
        <end position="182"/>
    </location>
</feature>
<feature type="helix" evidence="2">
    <location>
        <begin position="187"/>
        <end position="189"/>
    </location>
</feature>
<feature type="strand" evidence="2">
    <location>
        <begin position="193"/>
        <end position="195"/>
    </location>
</feature>
<feature type="strand" evidence="2">
    <location>
        <begin position="197"/>
        <end position="199"/>
    </location>
</feature>
<feature type="helix" evidence="2">
    <location>
        <begin position="200"/>
        <end position="202"/>
    </location>
</feature>
<feature type="helix" evidence="2">
    <location>
        <begin position="204"/>
        <end position="211"/>
    </location>
</feature>
<feature type="helix" evidence="2">
    <location>
        <begin position="215"/>
        <end position="224"/>
    </location>
</feature>
<feature type="strand" evidence="2">
    <location>
        <begin position="226"/>
        <end position="230"/>
    </location>
</feature>
<feature type="strand" evidence="2">
    <location>
        <begin position="235"/>
        <end position="237"/>
    </location>
</feature>
<feature type="helix" evidence="2">
    <location>
        <begin position="239"/>
        <end position="241"/>
    </location>
</feature>
<feature type="helix" evidence="2">
    <location>
        <begin position="244"/>
        <end position="250"/>
    </location>
</feature>
<feature type="turn" evidence="2">
    <location>
        <begin position="251"/>
        <end position="255"/>
    </location>
</feature>
<feature type="strand" evidence="2">
    <location>
        <begin position="258"/>
        <end position="262"/>
    </location>
</feature>
<feature type="strand" evidence="2">
    <location>
        <begin position="267"/>
        <end position="270"/>
    </location>
</feature>
<feature type="strand" evidence="2">
    <location>
        <begin position="276"/>
        <end position="279"/>
    </location>
</feature>
<feature type="helix" evidence="2">
    <location>
        <begin position="285"/>
        <end position="294"/>
    </location>
</feature>
<feature type="strand" evidence="2">
    <location>
        <begin position="296"/>
        <end position="305"/>
    </location>
</feature>
<feature type="turn" evidence="2">
    <location>
        <begin position="306"/>
        <end position="308"/>
    </location>
</feature>
<feature type="helix" evidence="2">
    <location>
        <begin position="309"/>
        <end position="315"/>
    </location>
</feature>
<feature type="helix" evidence="2">
    <location>
        <begin position="317"/>
        <end position="321"/>
    </location>
</feature>
<feature type="strand" evidence="2">
    <location>
        <begin position="327"/>
        <end position="332"/>
    </location>
</feature>
<feature type="helix" evidence="2">
    <location>
        <begin position="334"/>
        <end position="340"/>
    </location>
</feature>
<feature type="helix" evidence="2">
    <location>
        <begin position="345"/>
        <end position="347"/>
    </location>
</feature>
<feature type="helix" evidence="2">
    <location>
        <begin position="353"/>
        <end position="371"/>
    </location>
</feature>
<feature type="turn" evidence="2">
    <location>
        <begin position="372"/>
        <end position="374"/>
    </location>
</feature>
<feature type="strand" evidence="2">
    <location>
        <begin position="377"/>
        <end position="382"/>
    </location>
</feature>
<feature type="helix" evidence="2">
    <location>
        <begin position="389"/>
        <end position="401"/>
    </location>
</feature>
<feature type="strand" evidence="2">
    <location>
        <begin position="405"/>
        <end position="409"/>
    </location>
</feature>
<feature type="helix" evidence="2">
    <location>
        <begin position="411"/>
        <end position="414"/>
    </location>
</feature>
<feature type="helix" evidence="2">
    <location>
        <begin position="415"/>
        <end position="419"/>
    </location>
</feature>
<feature type="helix" evidence="2">
    <location>
        <begin position="420"/>
        <end position="432"/>
    </location>
</feature>
<feature type="helix" evidence="2">
    <location>
        <begin position="447"/>
        <end position="457"/>
    </location>
</feature>
<feature type="strand" evidence="2">
    <location>
        <begin position="464"/>
        <end position="466"/>
    </location>
</feature>
<feature type="helix" evidence="2">
    <location>
        <begin position="468"/>
        <end position="479"/>
    </location>
</feature>
<feature type="strand" evidence="2">
    <location>
        <begin position="496"/>
        <end position="498"/>
    </location>
</feature>
<feature type="strand" evidence="2">
    <location>
        <begin position="511"/>
        <end position="513"/>
    </location>
</feature>
<feature type="strand" evidence="2">
    <location>
        <begin position="515"/>
        <end position="519"/>
    </location>
</feature>
<feature type="turn" evidence="2">
    <location>
        <begin position="520"/>
        <end position="523"/>
    </location>
</feature>
<feature type="strand" evidence="2">
    <location>
        <begin position="524"/>
        <end position="528"/>
    </location>
</feature>
<feature type="helix" evidence="2">
    <location>
        <begin position="543"/>
        <end position="546"/>
    </location>
</feature>
<feature type="strand" evidence="2">
    <location>
        <begin position="555"/>
        <end position="557"/>
    </location>
</feature>
<evidence type="ECO:0000255" key="1">
    <source>
        <dbReference type="HAMAP-Rule" id="MF_01543"/>
    </source>
</evidence>
<evidence type="ECO:0007829" key="2">
    <source>
        <dbReference type="PDB" id="4IOJ"/>
    </source>
</evidence>
<protein>
    <recommendedName>
        <fullName evidence="1">Formate--tetrahydrofolate ligase</fullName>
        <ecNumber evidence="1">6.3.4.3</ecNumber>
    </recommendedName>
    <alternativeName>
        <fullName evidence="1">Formyltetrahydrofolate synthetase</fullName>
        <shortName evidence="1">FHS</shortName>
        <shortName evidence="1">FTHFS</shortName>
    </alternativeName>
</protein>
<gene>
    <name evidence="1" type="primary">fhs</name>
    <name type="ordered locus">Moth_0109</name>
</gene>
<name>FTHS_MOOTA</name>
<reference key="1">
    <citation type="journal article" date="2008" name="Environ. Microbiol.">
        <title>The complete genome sequence of Moorella thermoacetica (f. Clostridium thermoaceticum).</title>
        <authorList>
            <person name="Pierce E."/>
            <person name="Xie G."/>
            <person name="Barabote R.D."/>
            <person name="Saunders E."/>
            <person name="Han C.S."/>
            <person name="Detter J.C."/>
            <person name="Richardson P."/>
            <person name="Brettin T.S."/>
            <person name="Das A."/>
            <person name="Ljungdahl L.G."/>
            <person name="Ragsdale S.W."/>
        </authorList>
    </citation>
    <scope>NUCLEOTIDE SEQUENCE [LARGE SCALE GENOMIC DNA]</scope>
    <source>
        <strain>ATCC 39073 / JCM 9320</strain>
    </source>
</reference>
<sequence length="559" mass="59942">MSKVPSDIEIAQAAKMKPVMELARGLGIQEDEVELYGKYKAKISLDVYRRLKDKPDGKLILVTAITPTPAGEGKTTTSVGLTDALARLGKRVMVCLREPSLGPSFGIKGGAAGGGYAQVVPMEDINLHFTGDIHAVTYAHNLLAAMVDNHLQQGNVLNIDPRTITWRRVIDLNDRALRNIVIGLGGKANGVPRETGFDISVASEVMACLCLASDLMDLKERFSRIVVGYTYDGKPVTAGDLEAQGSMALLMKDAIKPNLVQTLENTPAFIHGGPFANIAHGCNSIIATKTALKLADYVVTEAGFGADLGAEKFYDVKCRYAGFKPDATVIVATVRALKMHGGVPKSDLATENLEALREGFANLEKHIENIGKFGVPAVVAINAFPTDTEAELNLLYELCAKAGAEVALSEVWAKGGEGGLELARKVLQTLESRPSNFHVLYNLDLSIKDKIAKIATEIYGADGVNYTAEADKAIQRYESLGYGNLPVVMAKTQYSFSDDMTKLGRPRNFTITVREVRLSAGAGFIVPITGAIMTMPGLPKRPAACNIDIDADGVITGLF</sequence>
<proteinExistence type="evidence at protein level"/>
<accession>Q2RM91</accession>